<evidence type="ECO:0000255" key="1"/>
<evidence type="ECO:0000255" key="2">
    <source>
        <dbReference type="PROSITE-ProRule" id="PRU01084"/>
    </source>
</evidence>
<evidence type="ECO:0000269" key="3">
    <source>
    </source>
</evidence>
<evidence type="ECO:0000305" key="4"/>
<evidence type="ECO:0007829" key="5">
    <source>
        <dbReference type="PDB" id="6R2N"/>
    </source>
</evidence>
<sequence>MSDPKLTKAVDSICDQFIVTKSKISQLTEYFIDCMEKGLEPCESDISQNKGLPMIPTFVTDKPSGQEHGVTMLAADLGGTNFRVCSVELLGNHEFKIEQEKSKIPTFFFQDDHHVTSKDLFQHMALITHQFLTKHHKDVIQDYKWKMGFTFSYPVDQTSLSSGKLIRWTKGFKIGDTVGQDVVQLFQQELNDIGLSNVHVVALTNDTTGTLLARCYASSDAARAINEPVIGCIFGTGTNGCYMEKLENIHKLDPASREELLSQGKTHMCINTEWGSFDNELNHLPTTSYDIKIDQQFSTNPGFHLFEKRVSGLYLGEILRNILLDLEKQELFDLKESVLKNNPFILTTETLSHIEIDTVENDLQDTRDALLKAADLETTFEERVLIQKLVRAISRRAAFLAAVPIAAILIKTNALNQSYHCQVEVGCDGSVVEHYPGFRSMMRHALALSPIGPEGERDVHLRISKDGSGVGAALCALHANY</sequence>
<reference key="1">
    <citation type="journal article" date="2004" name="Nature">
        <title>Genome evolution in yeasts.</title>
        <authorList>
            <person name="Dujon B."/>
            <person name="Sherman D."/>
            <person name="Fischer G."/>
            <person name="Durrens P."/>
            <person name="Casaregola S."/>
            <person name="Lafontaine I."/>
            <person name="de Montigny J."/>
            <person name="Marck C."/>
            <person name="Neuveglise C."/>
            <person name="Talla E."/>
            <person name="Goffard N."/>
            <person name="Frangeul L."/>
            <person name="Aigle M."/>
            <person name="Anthouard V."/>
            <person name="Babour A."/>
            <person name="Barbe V."/>
            <person name="Barnay S."/>
            <person name="Blanchin S."/>
            <person name="Beckerich J.-M."/>
            <person name="Beyne E."/>
            <person name="Bleykasten C."/>
            <person name="Boisrame A."/>
            <person name="Boyer J."/>
            <person name="Cattolico L."/>
            <person name="Confanioleri F."/>
            <person name="de Daruvar A."/>
            <person name="Despons L."/>
            <person name="Fabre E."/>
            <person name="Fairhead C."/>
            <person name="Ferry-Dumazet H."/>
            <person name="Groppi A."/>
            <person name="Hantraye F."/>
            <person name="Hennequin C."/>
            <person name="Jauniaux N."/>
            <person name="Joyet P."/>
            <person name="Kachouri R."/>
            <person name="Kerrest A."/>
            <person name="Koszul R."/>
            <person name="Lemaire M."/>
            <person name="Lesur I."/>
            <person name="Ma L."/>
            <person name="Muller H."/>
            <person name="Nicaud J.-M."/>
            <person name="Nikolski M."/>
            <person name="Oztas S."/>
            <person name="Ozier-Kalogeropoulos O."/>
            <person name="Pellenz S."/>
            <person name="Potier S."/>
            <person name="Richard G.-F."/>
            <person name="Straub M.-L."/>
            <person name="Suleau A."/>
            <person name="Swennen D."/>
            <person name="Tekaia F."/>
            <person name="Wesolowski-Louvel M."/>
            <person name="Westhof E."/>
            <person name="Wirth B."/>
            <person name="Zeniou-Meyer M."/>
            <person name="Zivanovic Y."/>
            <person name="Bolotin-Fukuhara M."/>
            <person name="Thierry A."/>
            <person name="Bouchier C."/>
            <person name="Caudron B."/>
            <person name="Scarpelli C."/>
            <person name="Gaillardin C."/>
            <person name="Weissenbach J."/>
            <person name="Wincker P."/>
            <person name="Souciet J.-L."/>
        </authorList>
    </citation>
    <scope>NUCLEOTIDE SEQUENCE [LARGE SCALE GENOMIC DNA]</scope>
    <source>
        <strain>ATCC 8585 / CBS 2359 / DSM 70799 / NBRC 1267 / NRRL Y-1140 / WM37</strain>
    </source>
</reference>
<reference key="2">
    <citation type="journal article" date="2007" name="FEMS Yeast Res.">
        <title>Identification and characterization of a novel glucose-phosphorylating enzyme in Kluyveromyces lactis.</title>
        <authorList>
            <person name="Kettner K."/>
            <person name="Mueller E.-C."/>
            <person name="Otto A."/>
            <person name="Roedel G."/>
            <person name="Breunig K.D."/>
            <person name="Kriegel T.M."/>
        </authorList>
    </citation>
    <scope>FUNCTION</scope>
    <scope>CATALYTIC ACTIVITY</scope>
    <scope>IDENTIFICATION BY MASS SPECTROMETRY</scope>
</reference>
<proteinExistence type="evidence at protein level"/>
<comment type="function">
    <text evidence="3">Glukokinase specific for aldohexoses. Phosphorylates glucose and mannose, but not fructose.</text>
</comment>
<comment type="catalytic activity">
    <reaction evidence="3">
        <text>D-glucose + ATP = D-glucose 6-phosphate + ADP + H(+)</text>
        <dbReference type="Rhea" id="RHEA:17825"/>
        <dbReference type="ChEBI" id="CHEBI:4167"/>
        <dbReference type="ChEBI" id="CHEBI:15378"/>
        <dbReference type="ChEBI" id="CHEBI:30616"/>
        <dbReference type="ChEBI" id="CHEBI:61548"/>
        <dbReference type="ChEBI" id="CHEBI:456216"/>
        <dbReference type="EC" id="2.7.1.2"/>
    </reaction>
    <physiologicalReaction direction="left-to-right" evidence="3">
        <dbReference type="Rhea" id="RHEA:17826"/>
    </physiologicalReaction>
</comment>
<comment type="catalytic activity">
    <reaction evidence="3">
        <text>a D-hexose + ATP = a D-hexose 6-phosphate + ADP + H(+)</text>
        <dbReference type="Rhea" id="RHEA:22740"/>
        <dbReference type="ChEBI" id="CHEBI:4194"/>
        <dbReference type="ChEBI" id="CHEBI:15378"/>
        <dbReference type="ChEBI" id="CHEBI:30616"/>
        <dbReference type="ChEBI" id="CHEBI:229467"/>
        <dbReference type="ChEBI" id="CHEBI:456216"/>
        <dbReference type="EC" id="2.7.1.1"/>
    </reaction>
    <physiologicalReaction direction="left-to-right" evidence="3">
        <dbReference type="Rhea" id="RHEA:22741"/>
    </physiologicalReaction>
</comment>
<comment type="catalytic activity">
    <reaction evidence="3">
        <text>D-mannose + ATP = D-mannose 6-phosphate + ADP + H(+)</text>
        <dbReference type="Rhea" id="RHEA:11028"/>
        <dbReference type="ChEBI" id="CHEBI:4208"/>
        <dbReference type="ChEBI" id="CHEBI:15378"/>
        <dbReference type="ChEBI" id="CHEBI:30616"/>
        <dbReference type="ChEBI" id="CHEBI:58735"/>
        <dbReference type="ChEBI" id="CHEBI:456216"/>
        <dbReference type="EC" id="2.7.1.1"/>
    </reaction>
    <physiologicalReaction direction="left-to-right" evidence="3">
        <dbReference type="Rhea" id="RHEA:11029"/>
    </physiologicalReaction>
</comment>
<comment type="pathway">
    <text evidence="3">Carbohydrate metabolism; hexose metabolism.</text>
</comment>
<comment type="pathway">
    <text evidence="3">Carbohydrate degradation; glycolysis; D-glyceraldehyde 3-phosphate and glycerone phosphate from D-glucose: step 1/4.</text>
</comment>
<comment type="similarity">
    <text evidence="2 4">Belongs to the hexokinase family.</text>
</comment>
<keyword id="KW-0002">3D-structure</keyword>
<keyword id="KW-0067">ATP-binding</keyword>
<keyword id="KW-0324">Glycolysis</keyword>
<keyword id="KW-0418">Kinase</keyword>
<keyword id="KW-0547">Nucleotide-binding</keyword>
<keyword id="KW-1185">Reference proteome</keyword>
<keyword id="KW-0808">Transferase</keyword>
<name>HXKG_KLULA</name>
<accession>Q6CUZ3</accession>
<gene>
    <name type="primary">GLK1</name>
    <name type="ordered locus">KLLA0C01155g</name>
</gene>
<feature type="chain" id="PRO_0000364088" description="Glucokinase-1">
    <location>
        <begin position="1"/>
        <end position="481"/>
    </location>
</feature>
<feature type="domain" description="Hexokinase" evidence="2">
    <location>
        <begin position="4"/>
        <end position="477"/>
    </location>
</feature>
<feature type="region of interest" description="Hexokinase small subdomain" evidence="2">
    <location>
        <begin position="64"/>
        <end position="204"/>
    </location>
</feature>
<feature type="region of interest" description="Glucose-binding" evidence="1">
    <location>
        <begin position="146"/>
        <end position="172"/>
    </location>
</feature>
<feature type="region of interest" description="Hexokinase large subdomain" evidence="2">
    <location>
        <begin position="205"/>
        <end position="466"/>
    </location>
</feature>
<feature type="binding site" evidence="1">
    <location>
        <position position="101"/>
    </location>
    <ligand>
        <name>ATP</name>
        <dbReference type="ChEBI" id="CHEBI:30616"/>
    </ligand>
</feature>
<feature type="binding site" evidence="1">
    <location>
        <begin position="466"/>
        <end position="471"/>
    </location>
    <ligand>
        <name>ATP</name>
        <dbReference type="ChEBI" id="CHEBI:30616"/>
    </ligand>
</feature>
<feature type="helix" evidence="5">
    <location>
        <begin position="4"/>
        <end position="16"/>
    </location>
</feature>
<feature type="helix" evidence="5">
    <location>
        <begin position="21"/>
        <end position="38"/>
    </location>
</feature>
<feature type="strand" evidence="5">
    <location>
        <begin position="68"/>
        <end position="77"/>
    </location>
</feature>
<feature type="strand" evidence="5">
    <location>
        <begin position="79"/>
        <end position="91"/>
    </location>
</feature>
<feature type="strand" evidence="5">
    <location>
        <begin position="94"/>
        <end position="103"/>
    </location>
</feature>
<feature type="helix" evidence="5">
    <location>
        <begin position="106"/>
        <end position="109"/>
    </location>
</feature>
<feature type="strand" evidence="5">
    <location>
        <begin position="111"/>
        <end position="113"/>
    </location>
</feature>
<feature type="helix" evidence="5">
    <location>
        <begin position="117"/>
        <end position="135"/>
    </location>
</feature>
<feature type="turn" evidence="5">
    <location>
        <begin position="137"/>
        <end position="142"/>
    </location>
</feature>
<feature type="strand" evidence="5">
    <location>
        <begin position="146"/>
        <end position="150"/>
    </location>
</feature>
<feature type="strand" evidence="5">
    <location>
        <begin position="155"/>
        <end position="159"/>
    </location>
</feature>
<feature type="strand" evidence="5">
    <location>
        <begin position="162"/>
        <end position="165"/>
    </location>
</feature>
<feature type="turn" evidence="5">
    <location>
        <begin position="176"/>
        <end position="179"/>
    </location>
</feature>
<feature type="helix" evidence="5">
    <location>
        <begin position="182"/>
        <end position="192"/>
    </location>
</feature>
<feature type="strand" evidence="5">
    <location>
        <begin position="198"/>
        <end position="204"/>
    </location>
</feature>
<feature type="helix" evidence="5">
    <location>
        <begin position="206"/>
        <end position="217"/>
    </location>
</feature>
<feature type="turn" evidence="5">
    <location>
        <begin position="223"/>
        <end position="225"/>
    </location>
</feature>
<feature type="strand" evidence="5">
    <location>
        <begin position="226"/>
        <end position="245"/>
    </location>
</feature>
<feature type="helix" evidence="5">
    <location>
        <begin position="246"/>
        <end position="248"/>
    </location>
</feature>
<feature type="helix" evidence="5">
    <location>
        <begin position="254"/>
        <end position="262"/>
    </location>
</feature>
<feature type="strand" evidence="5">
    <location>
        <begin position="267"/>
        <end position="271"/>
    </location>
</feature>
<feature type="helix" evidence="5">
    <location>
        <begin position="274"/>
        <end position="276"/>
    </location>
</feature>
<feature type="turn" evidence="5">
    <location>
        <begin position="277"/>
        <end position="280"/>
    </location>
</feature>
<feature type="strand" evidence="5">
    <location>
        <begin position="282"/>
        <end position="284"/>
    </location>
</feature>
<feature type="helix" evidence="5">
    <location>
        <begin position="288"/>
        <end position="297"/>
    </location>
</feature>
<feature type="helix" evidence="5">
    <location>
        <begin position="305"/>
        <end position="310"/>
    </location>
</feature>
<feature type="turn" evidence="5">
    <location>
        <begin position="312"/>
        <end position="314"/>
    </location>
</feature>
<feature type="helix" evidence="5">
    <location>
        <begin position="315"/>
        <end position="328"/>
    </location>
</feature>
<feature type="helix" evidence="5">
    <location>
        <begin position="348"/>
        <end position="355"/>
    </location>
</feature>
<feature type="turn" evidence="5">
    <location>
        <begin position="359"/>
        <end position="363"/>
    </location>
</feature>
<feature type="helix" evidence="5">
    <location>
        <begin position="364"/>
        <end position="374"/>
    </location>
</feature>
<feature type="helix" evidence="5">
    <location>
        <begin position="380"/>
        <end position="412"/>
    </location>
</feature>
<feature type="strand" evidence="5">
    <location>
        <begin position="415"/>
        <end position="420"/>
    </location>
</feature>
<feature type="strand" evidence="5">
    <location>
        <begin position="422"/>
        <end position="429"/>
    </location>
</feature>
<feature type="helix" evidence="5">
    <location>
        <begin position="430"/>
        <end position="434"/>
    </location>
</feature>
<feature type="helix" evidence="5">
    <location>
        <begin position="438"/>
        <end position="448"/>
    </location>
</feature>
<feature type="helix" evidence="5">
    <location>
        <begin position="452"/>
        <end position="456"/>
    </location>
</feature>
<feature type="strand" evidence="5">
    <location>
        <begin position="459"/>
        <end position="463"/>
    </location>
</feature>
<feature type="turn" evidence="5">
    <location>
        <begin position="467"/>
        <end position="469"/>
    </location>
</feature>
<feature type="helix" evidence="5">
    <location>
        <begin position="470"/>
        <end position="477"/>
    </location>
</feature>
<protein>
    <recommendedName>
        <fullName>Glucokinase-1</fullName>
        <ecNumber evidence="3">2.7.1.2</ecNumber>
    </recommendedName>
    <alternativeName>
        <fullName>Glucose kinase 1</fullName>
        <shortName>GLK-1</shortName>
    </alternativeName>
    <alternativeName>
        <fullName evidence="4">Hexokinase GLK1</fullName>
        <ecNumber evidence="3">2.7.1.1</ecNumber>
    </alternativeName>
</protein>
<organism>
    <name type="scientific">Kluyveromyces lactis (strain ATCC 8585 / CBS 2359 / DSM 70799 / NBRC 1267 / NRRL Y-1140 / WM37)</name>
    <name type="common">Yeast</name>
    <name type="synonym">Candida sphaerica</name>
    <dbReference type="NCBI Taxonomy" id="284590"/>
    <lineage>
        <taxon>Eukaryota</taxon>
        <taxon>Fungi</taxon>
        <taxon>Dikarya</taxon>
        <taxon>Ascomycota</taxon>
        <taxon>Saccharomycotina</taxon>
        <taxon>Saccharomycetes</taxon>
        <taxon>Saccharomycetales</taxon>
        <taxon>Saccharomycetaceae</taxon>
        <taxon>Kluyveromyces</taxon>
    </lineage>
</organism>
<dbReference type="EC" id="2.7.1.2" evidence="3"/>
<dbReference type="EC" id="2.7.1.1" evidence="3"/>
<dbReference type="EMBL" id="CR382123">
    <property type="protein sequence ID" value="CAH01097.1"/>
    <property type="molecule type" value="Genomic_DNA"/>
</dbReference>
<dbReference type="RefSeq" id="XP_452246.1">
    <property type="nucleotide sequence ID" value="XM_452246.1"/>
</dbReference>
<dbReference type="PDB" id="6R2N">
    <property type="method" value="X-ray"/>
    <property type="resolution" value="2.60 A"/>
    <property type="chains" value="A/B/C=2-481"/>
</dbReference>
<dbReference type="PDBsum" id="6R2N"/>
<dbReference type="SMR" id="Q6CUZ3"/>
<dbReference type="FunCoup" id="Q6CUZ3">
    <property type="interactions" value="1197"/>
</dbReference>
<dbReference type="STRING" id="284590.Q6CUZ3"/>
<dbReference type="PaxDb" id="284590-Q6CUZ3"/>
<dbReference type="KEGG" id="kla:KLLA0_C01155g"/>
<dbReference type="eggNOG" id="KOG1369">
    <property type="taxonomic scope" value="Eukaryota"/>
</dbReference>
<dbReference type="HOGENOM" id="CLU_014393_5_0_1"/>
<dbReference type="InParanoid" id="Q6CUZ3"/>
<dbReference type="OMA" id="YPNFEGY"/>
<dbReference type="BRENDA" id="2.7.1.2">
    <property type="organism ID" value="2825"/>
</dbReference>
<dbReference type="UniPathway" id="UPA00109">
    <property type="reaction ID" value="UER00180"/>
</dbReference>
<dbReference type="UniPathway" id="UPA00242"/>
<dbReference type="Proteomes" id="UP000000598">
    <property type="component" value="Chromosome C"/>
</dbReference>
<dbReference type="GO" id="GO:0005829">
    <property type="term" value="C:cytosol"/>
    <property type="evidence" value="ECO:0007669"/>
    <property type="project" value="TreeGrafter"/>
</dbReference>
<dbReference type="GO" id="GO:0005739">
    <property type="term" value="C:mitochondrion"/>
    <property type="evidence" value="ECO:0007669"/>
    <property type="project" value="TreeGrafter"/>
</dbReference>
<dbReference type="GO" id="GO:0005524">
    <property type="term" value="F:ATP binding"/>
    <property type="evidence" value="ECO:0007669"/>
    <property type="project" value="UniProtKB-KW"/>
</dbReference>
<dbReference type="GO" id="GO:0005536">
    <property type="term" value="F:D-glucose binding"/>
    <property type="evidence" value="ECO:0007669"/>
    <property type="project" value="InterPro"/>
</dbReference>
<dbReference type="GO" id="GO:0008865">
    <property type="term" value="F:fructokinase activity"/>
    <property type="evidence" value="ECO:0007669"/>
    <property type="project" value="TreeGrafter"/>
</dbReference>
<dbReference type="GO" id="GO:0004340">
    <property type="term" value="F:glucokinase activity"/>
    <property type="evidence" value="ECO:0007669"/>
    <property type="project" value="UniProtKB-EC"/>
</dbReference>
<dbReference type="GO" id="GO:0019158">
    <property type="term" value="F:mannokinase activity"/>
    <property type="evidence" value="ECO:0007669"/>
    <property type="project" value="RHEA"/>
</dbReference>
<dbReference type="GO" id="GO:0006006">
    <property type="term" value="P:glucose metabolic process"/>
    <property type="evidence" value="ECO:0007669"/>
    <property type="project" value="TreeGrafter"/>
</dbReference>
<dbReference type="GO" id="GO:0006096">
    <property type="term" value="P:glycolytic process"/>
    <property type="evidence" value="ECO:0007669"/>
    <property type="project" value="UniProtKB-UniPathway"/>
</dbReference>
<dbReference type="GO" id="GO:0001678">
    <property type="term" value="P:intracellular glucose homeostasis"/>
    <property type="evidence" value="ECO:0007669"/>
    <property type="project" value="InterPro"/>
</dbReference>
<dbReference type="CDD" id="cd24088">
    <property type="entry name" value="ASKHA_NBD_GLK1-2_fungi"/>
    <property type="match status" value="1"/>
</dbReference>
<dbReference type="FunFam" id="3.30.420.40:FF:000034">
    <property type="entry name" value="Phosphotransferase"/>
    <property type="match status" value="1"/>
</dbReference>
<dbReference type="Gene3D" id="3.30.420.40">
    <property type="match status" value="1"/>
</dbReference>
<dbReference type="Gene3D" id="3.40.367.20">
    <property type="match status" value="1"/>
</dbReference>
<dbReference type="InterPro" id="IPR043129">
    <property type="entry name" value="ATPase_NBD"/>
</dbReference>
<dbReference type="InterPro" id="IPR001312">
    <property type="entry name" value="Hexokinase"/>
</dbReference>
<dbReference type="InterPro" id="IPR019807">
    <property type="entry name" value="Hexokinase_BS"/>
</dbReference>
<dbReference type="InterPro" id="IPR022673">
    <property type="entry name" value="Hexokinase_C"/>
</dbReference>
<dbReference type="InterPro" id="IPR022672">
    <property type="entry name" value="Hexokinase_N"/>
</dbReference>
<dbReference type="PANTHER" id="PTHR19443:SF30">
    <property type="entry name" value="GLUCOKINASE-1-RELATED"/>
    <property type="match status" value="1"/>
</dbReference>
<dbReference type="PANTHER" id="PTHR19443">
    <property type="entry name" value="HEXOKINASE"/>
    <property type="match status" value="1"/>
</dbReference>
<dbReference type="Pfam" id="PF00349">
    <property type="entry name" value="Hexokinase_1"/>
    <property type="match status" value="1"/>
</dbReference>
<dbReference type="Pfam" id="PF03727">
    <property type="entry name" value="Hexokinase_2"/>
    <property type="match status" value="1"/>
</dbReference>
<dbReference type="PRINTS" id="PR00475">
    <property type="entry name" value="HEXOKINASE"/>
</dbReference>
<dbReference type="SUPFAM" id="SSF53067">
    <property type="entry name" value="Actin-like ATPase domain"/>
    <property type="match status" value="2"/>
</dbReference>
<dbReference type="PROSITE" id="PS00378">
    <property type="entry name" value="HEXOKINASE_1"/>
    <property type="match status" value="1"/>
</dbReference>
<dbReference type="PROSITE" id="PS51748">
    <property type="entry name" value="HEXOKINASE_2"/>
    <property type="match status" value="1"/>
</dbReference>